<reference key="1">
    <citation type="journal article" date="1996" name="J. Biol. Chem.">
        <title>The inositol 5'-phosphatase SHIP binds to immunoreceptor signaling motifs and responds to high affinity IgE receptor aggregation.</title>
        <authorList>
            <person name="Osborne M.A."/>
            <person name="Zenner G."/>
            <person name="Lubinus M."/>
            <person name="Zhang X."/>
            <person name="Songyang Z."/>
            <person name="Cantley L.C."/>
            <person name="Majerus P."/>
            <person name="Burn P."/>
            <person name="Kochan J.P."/>
        </authorList>
    </citation>
    <scope>NUCLEOTIDE SEQUENCE [MRNA]</scope>
    <scope>CATALYTIC ACTIVITY</scope>
    <scope>PHOSPHORYLATION</scope>
    <scope>INTERACTION WITH MS4A2; SHC1; GRB2 AND FCER1G</scope>
</reference>
<reference key="2">
    <citation type="journal article" date="2012" name="Nat. Commun.">
        <title>Quantitative maps of protein phosphorylation sites across 14 different rat organs and tissues.</title>
        <authorList>
            <person name="Lundby A."/>
            <person name="Secher A."/>
            <person name="Lage K."/>
            <person name="Nordsborg N.B."/>
            <person name="Dmytriyev A."/>
            <person name="Lundby C."/>
            <person name="Olsen J.V."/>
        </authorList>
    </citation>
    <scope>PHOSPHORYLATION [LARGE SCALE ANALYSIS] AT SER-245; THR-963 AND SER-971</scope>
    <scope>IDENTIFICATION BY MASS SPECTROMETRY [LARGE SCALE ANALYSIS]</scope>
</reference>
<feature type="chain" id="PRO_0000302868" description="Phosphatidylinositol 3,4,5-trisphosphate 5-phosphatase 1">
    <location>
        <begin position="1"/>
        <end position="1190"/>
    </location>
</feature>
<feature type="domain" description="SH2" evidence="4">
    <location>
        <begin position="8"/>
        <end position="104"/>
    </location>
</feature>
<feature type="region of interest" description="Disordered" evidence="5">
    <location>
        <begin position="111"/>
        <end position="130"/>
    </location>
</feature>
<feature type="region of interest" description="Disordered" evidence="5">
    <location>
        <begin position="946"/>
        <end position="1190"/>
    </location>
</feature>
<feature type="region of interest" description="Interaction with DAB2" evidence="1">
    <location>
        <begin position="1014"/>
        <end position="1028"/>
    </location>
</feature>
<feature type="short sequence motif" description="SH3-binding 1">
    <location>
        <begin position="126"/>
        <end position="131"/>
    </location>
</feature>
<feature type="short sequence motif" description="NPXY motif 1">
    <location>
        <begin position="914"/>
        <end position="917"/>
    </location>
</feature>
<feature type="short sequence motif" description="SH3-binding 2">
    <location>
        <begin position="969"/>
        <end position="974"/>
    </location>
</feature>
<feature type="short sequence motif" description="NPXY motif 2">
    <location>
        <begin position="1017"/>
        <end position="1020"/>
    </location>
</feature>
<feature type="short sequence motif" description="SH3-binding 3">
    <location>
        <begin position="1038"/>
        <end position="1049"/>
    </location>
</feature>
<feature type="compositionally biased region" description="Acidic residues" evidence="5">
    <location>
        <begin position="111"/>
        <end position="120"/>
    </location>
</feature>
<feature type="compositionally biased region" description="Pro residues" evidence="5">
    <location>
        <begin position="961"/>
        <end position="971"/>
    </location>
</feature>
<feature type="compositionally biased region" description="Basic and acidic residues" evidence="5">
    <location>
        <begin position="989"/>
        <end position="998"/>
    </location>
</feature>
<feature type="compositionally biased region" description="Basic and acidic residues" evidence="5">
    <location>
        <begin position="1031"/>
        <end position="1045"/>
    </location>
</feature>
<feature type="compositionally biased region" description="Pro residues" evidence="5">
    <location>
        <begin position="1140"/>
        <end position="1149"/>
    </location>
</feature>
<feature type="compositionally biased region" description="Basic and acidic residues" evidence="5">
    <location>
        <begin position="1161"/>
        <end position="1183"/>
    </location>
</feature>
<feature type="modified residue" description="Phosphoserine" evidence="8">
    <location>
        <position position="245"/>
    </location>
</feature>
<feature type="modified residue" description="Phosphotyrosine" evidence="2">
    <location>
        <position position="917"/>
    </location>
</feature>
<feature type="modified residue" description="Phosphoserine" evidence="3">
    <location>
        <position position="934"/>
    </location>
</feature>
<feature type="modified residue" description="Phosphotyrosine" evidence="3">
    <location>
        <position position="944"/>
    </location>
</feature>
<feature type="modified residue" description="Phosphothreonine" evidence="8">
    <location>
        <position position="963"/>
    </location>
</feature>
<feature type="modified residue" description="Phosphoserine" evidence="3">
    <location>
        <position position="966"/>
    </location>
</feature>
<feature type="modified residue" description="Phosphoserine" evidence="8">
    <location>
        <position position="971"/>
    </location>
</feature>
<feature type="modified residue" description="Phosphotyrosine" evidence="3">
    <location>
        <position position="1020"/>
    </location>
</feature>
<organism>
    <name type="scientific">Rattus norvegicus</name>
    <name type="common">Rat</name>
    <dbReference type="NCBI Taxonomy" id="10116"/>
    <lineage>
        <taxon>Eukaryota</taxon>
        <taxon>Metazoa</taxon>
        <taxon>Chordata</taxon>
        <taxon>Craniata</taxon>
        <taxon>Vertebrata</taxon>
        <taxon>Euteleostomi</taxon>
        <taxon>Mammalia</taxon>
        <taxon>Eutheria</taxon>
        <taxon>Euarchontoglires</taxon>
        <taxon>Glires</taxon>
        <taxon>Rodentia</taxon>
        <taxon>Myomorpha</taxon>
        <taxon>Muroidea</taxon>
        <taxon>Muridae</taxon>
        <taxon>Murinae</taxon>
        <taxon>Rattus</taxon>
    </lineage>
</organism>
<protein>
    <recommendedName>
        <fullName>Phosphatidylinositol 3,4,5-trisphosphate 5-phosphatase 1</fullName>
        <ecNumber evidence="6">3.1.3.86</ecNumber>
    </recommendedName>
    <alternativeName>
        <fullName>Inositol polyphosphate-5-phosphatase D</fullName>
        <ecNumber evidence="2">3.1.3.56</ecNumber>
    </alternativeName>
    <alternativeName>
        <fullName>Phosphatidylinositol-4,5-bisphosphate 5-phosphatase</fullName>
        <ecNumber evidence="2">3.1.3.36</ecNumber>
    </alternativeName>
    <alternativeName>
        <fullName>SH2 domain-containing inositol 5'-phosphatase 1</fullName>
        <shortName>SH2 domain-containing inositol phosphatase 1</shortName>
        <shortName>SHIP-1</shortName>
    </alternativeName>
</protein>
<proteinExistence type="evidence at protein level"/>
<gene>
    <name type="primary">Inpp5d</name>
    <name type="synonym">Ship</name>
    <name type="synonym">Ship1</name>
</gene>
<keyword id="KW-0053">Apoptosis</keyword>
<keyword id="KW-1003">Cell membrane</keyword>
<keyword id="KW-0963">Cytoplasm</keyword>
<keyword id="KW-0206">Cytoskeleton</keyword>
<keyword id="KW-0378">Hydrolase</keyword>
<keyword id="KW-0391">Immunity</keyword>
<keyword id="KW-0443">Lipid metabolism</keyword>
<keyword id="KW-0472">Membrane</keyword>
<keyword id="KW-0597">Phosphoprotein</keyword>
<keyword id="KW-1185">Reference proteome</keyword>
<keyword id="KW-0677">Repeat</keyword>
<keyword id="KW-0727">SH2 domain</keyword>
<keyword id="KW-0729">SH3-binding</keyword>
<comment type="function">
    <text evidence="2 6">Phosphatidylinositol (PtdIns) phosphatase that specifically hydrolyzes the 5-phosphate of phosphatidylinositol-3,4,5-trisphosphate (PtdIns(3,4,5)P3) to produce PtdIns(3,4)P2, thereby negatively regulating the PI3K (phosphoinositide 3-kinase) pathways (PubMed:8910587). Also able to hydrolyze the 5-phosphate of phosphatidylinositol-4,5-bisphosphate (PtdIns(4,5)P3) and inositol 1,3,4,5-tetrakisphosphate (By similarity). Acts as a negative regulator of B-cell antigen receptor signaling. Mediates signaling from the FC-gamma-RIIB receptor (FCGR2B), playing a central role in terminating signal transduction from activating immune/hematopoietic cell receptor systems. Acts as a negative regulator of myeloid cell proliferation/survival and chemotaxis, mast cell degranulation, immune cells homeostasis, integrin alpha-IIb/beta-3 signaling in platelets and JNK signaling in B-cells. Regulates proliferation of osteoclast precursors, macrophage programming, phagocytosis and activation and is required for endotoxin tolerance. Involved in the control of cell-cell junctions, CD32a signaling in neutrophils and modulation of EGF-induced phospholipase C activity. Key regulator of neutrophil migration, by governing the formation of the leading edge and polarization required for chemotaxis. Modulates FCGR3/CD16-mediated cytotoxicity in NK cells. Mediates the activin/TGF-beta-induced apoptosis through its Smad-dependent expression (By similarity).</text>
</comment>
<comment type="catalytic activity">
    <reaction evidence="6">
        <text>a 1,2-diacyl-sn-glycero-3-phospho-(1D-myo-inositol-3,4,5-trisphosphate) + H2O = a 1,2-diacyl-sn-glycero-3-phospho-(1D-myo-inositol-3,4-bisphosphate) + phosphate</text>
        <dbReference type="Rhea" id="RHEA:25528"/>
        <dbReference type="ChEBI" id="CHEBI:15377"/>
        <dbReference type="ChEBI" id="CHEBI:43474"/>
        <dbReference type="ChEBI" id="CHEBI:57658"/>
        <dbReference type="ChEBI" id="CHEBI:57836"/>
        <dbReference type="EC" id="3.1.3.86"/>
    </reaction>
</comment>
<comment type="catalytic activity">
    <reaction evidence="2">
        <text>1D-myo-inositol 1,3,4,5-tetrakisphosphate + H2O = 1D-myo-inositol 1,3,4-trisphosphate + phosphate</text>
        <dbReference type="Rhea" id="RHEA:11392"/>
        <dbReference type="ChEBI" id="CHEBI:15377"/>
        <dbReference type="ChEBI" id="CHEBI:43474"/>
        <dbReference type="ChEBI" id="CHEBI:57895"/>
        <dbReference type="ChEBI" id="CHEBI:58414"/>
        <dbReference type="EC" id="3.1.3.56"/>
    </reaction>
</comment>
<comment type="catalytic activity">
    <reaction evidence="2">
        <text>a 1,2-diacyl-sn-glycero-3-phospho-(1D-myo-inositol-4,5-bisphosphate) + H2O = a 1,2-diacyl-sn-glycero-3-phospho-(1D-myo-inositol 4-phosphate) + phosphate</text>
        <dbReference type="Rhea" id="RHEA:22764"/>
        <dbReference type="ChEBI" id="CHEBI:15377"/>
        <dbReference type="ChEBI" id="CHEBI:43474"/>
        <dbReference type="ChEBI" id="CHEBI:58178"/>
        <dbReference type="ChEBI" id="CHEBI:58456"/>
        <dbReference type="EC" id="3.1.3.36"/>
    </reaction>
</comment>
<comment type="activity regulation">
    <text evidence="1">Activated upon translocation to the sites of synthesis of PtdIns(3,4,5)P3 in the membrane.</text>
</comment>
<comment type="subunit">
    <text evidence="2 3 6">Interacts with tyrosine phosphorylated forms of SHC1 (PubMed:8910587). Interacts with tyrosine phosphorylated form of DOK1 (By similarity). Interacts with tyrosine phosphorylated form of DOK3 (By similarity). Interacts with tyrosine phosphorylated form of SLAMF1/CD150 (By similarity). Interacts with PTPN11/SHP-2 in response to IL-3 (By similarity). Interacts with receptor EPOR (By similarity). Interacts with receptors MS4A2/FCER1B and FCER1G (PubMed:8910587). Interacts with receptors FCGR2B and FCGR3 (By similarity). Interacts with receptor FCGR2A, leading to regulate gene expression during the phagocytic process (By similarity). Interacts with GRB2 (PubMed:8910587). Interacts with PLCG1 (By similarity). Interacts with tyrosine kinases SRC and TEC (By similarity). Interacts with c-Met/MET (By similarity). Interacts with MILR1 (tyrosine-phosphorylated) (By similarity). Can weakly interact (via NPXY motif 2) with DAB2 (via PID domain); the interaction is impaired by tyrosine phosphorylation of the NPXY motif (By similarity). Interacts (via SH2 domain) with tyrosine phosphorylated KLRC1 (via ITIM). Interacts with MPL/TPOR (By similarity).</text>
</comment>
<comment type="interaction">
    <interactant intactId="EBI-8008869">
        <id>P97573</id>
    </interactant>
    <interactant intactId="EBI-1111248">
        <id>Q96RU3</id>
        <label>FNBP1</label>
    </interactant>
    <organismsDiffer>true</organismsDiffer>
    <experiments>2</experiments>
</comment>
<comment type="interaction">
    <interactant intactId="EBI-8008869">
        <id>P97573</id>
    </interactant>
    <interactant intactId="EBI-16191375">
        <id>Q15642-1</id>
        <label>TRIP10</label>
    </interactant>
    <organismsDiffer>true</organismsDiffer>
    <experiments>2</experiments>
</comment>
<comment type="subcellular location">
    <subcellularLocation>
        <location evidence="3">Cytoplasm</location>
    </subcellularLocation>
    <subcellularLocation>
        <location evidence="3">Cell membrane</location>
        <topology evidence="3">Peripheral membrane protein</topology>
    </subcellularLocation>
    <subcellularLocation>
        <location evidence="3">Membrane raft</location>
    </subcellularLocation>
    <subcellularLocation>
        <location evidence="3">Cytoplasm</location>
        <location evidence="3">Cytoskeleton</location>
    </subcellularLocation>
    <text evidence="3">Translocates to the plasma membrane when activated, translocation is probably due to different mechanisms depending on the stimulus and cell type. Translocates from the cytoplasm to membrane ruffles in a FCGR3/CD16-dependent manner. Colocalizes with FC-gamma-RIIB receptor (FCGR2B) or FCGR3/CD16 at membrane ruffles. Tyrosine phosphorylation may also participate in membrane localization.</text>
</comment>
<comment type="domain">
    <text evidence="3">The SH2 domain interacts with tyrosine phosphorylated forms of proteins such as SHC1 or PTPN11/SHP-2. It competes with that of GRB2 for binding to phosphorylated SHC1 to inhibit the Ras pathway. It is also required for tyrosine phosphorylation (By similarity).</text>
</comment>
<comment type="domain">
    <text evidence="3">The NPXY sequence motif found in many tyrosine-phosphorylated proteins is required for the specific binding of the PID domain.</text>
</comment>
<comment type="PTM">
    <text evidence="6">Tyrosine phosphorylated by the members of the SRC family after exposure to a diverse array of extracellular stimuli such as cytokines, growth factors, antibodies, chemokines, integrin ligands and hypertonic and oxidative stress. Phosphorylated upon IgG receptor FCGR2B-binding.</text>
</comment>
<comment type="similarity">
    <text evidence="7">Belongs to the inositol 1,4,5-trisphosphate 5-phosphatase family.</text>
</comment>
<evidence type="ECO:0000250" key="1"/>
<evidence type="ECO:0000250" key="2">
    <source>
        <dbReference type="UniProtKB" id="Q92835"/>
    </source>
</evidence>
<evidence type="ECO:0000250" key="3">
    <source>
        <dbReference type="UniProtKB" id="Q9ES52"/>
    </source>
</evidence>
<evidence type="ECO:0000255" key="4">
    <source>
        <dbReference type="PROSITE-ProRule" id="PRU00191"/>
    </source>
</evidence>
<evidence type="ECO:0000256" key="5">
    <source>
        <dbReference type="SAM" id="MobiDB-lite"/>
    </source>
</evidence>
<evidence type="ECO:0000269" key="6">
    <source>
    </source>
</evidence>
<evidence type="ECO:0000305" key="7"/>
<evidence type="ECO:0007744" key="8">
    <source>
    </source>
</evidence>
<dbReference type="EC" id="3.1.3.86" evidence="6"/>
<dbReference type="EC" id="3.1.3.56" evidence="2"/>
<dbReference type="EC" id="3.1.3.36" evidence="2"/>
<dbReference type="EMBL" id="U55192">
    <property type="protein sequence ID" value="AAB40610.1"/>
    <property type="molecule type" value="mRNA"/>
</dbReference>
<dbReference type="RefSeq" id="NP_062184.1">
    <property type="nucleotide sequence ID" value="NM_019311.1"/>
</dbReference>
<dbReference type="SMR" id="P97573"/>
<dbReference type="BioGRID" id="248482">
    <property type="interactions" value="6"/>
</dbReference>
<dbReference type="DIP" id="DIP-42709N"/>
<dbReference type="FunCoup" id="P97573">
    <property type="interactions" value="771"/>
</dbReference>
<dbReference type="IntAct" id="P97573">
    <property type="interactions" value="15"/>
</dbReference>
<dbReference type="MINT" id="P97573"/>
<dbReference type="STRING" id="10116.ENSRNOP00000040111"/>
<dbReference type="GlyGen" id="P97573">
    <property type="glycosylation" value="2 sites"/>
</dbReference>
<dbReference type="iPTMnet" id="P97573"/>
<dbReference type="PhosphoSitePlus" id="P97573"/>
<dbReference type="PaxDb" id="10116-ENSRNOP00000040111"/>
<dbReference type="GeneID" id="54259"/>
<dbReference type="KEGG" id="rno:54259"/>
<dbReference type="UCSC" id="RGD:2914">
    <property type="organism name" value="rat"/>
</dbReference>
<dbReference type="AGR" id="RGD:2914"/>
<dbReference type="CTD" id="3635"/>
<dbReference type="RGD" id="2914">
    <property type="gene designation" value="Inpp5d"/>
</dbReference>
<dbReference type="eggNOG" id="KOG0565">
    <property type="taxonomic scope" value="Eukaryota"/>
</dbReference>
<dbReference type="InParanoid" id="P97573"/>
<dbReference type="PhylomeDB" id="P97573"/>
<dbReference type="Reactome" id="R-RNO-1660499">
    <property type="pathway name" value="Synthesis of PIPs at the plasma membrane"/>
</dbReference>
<dbReference type="Reactome" id="R-RNO-1855204">
    <property type="pathway name" value="Synthesis of IP3 and IP4 in the cytosol"/>
</dbReference>
<dbReference type="Reactome" id="R-RNO-202424">
    <property type="pathway name" value="Downstream TCR signaling"/>
</dbReference>
<dbReference type="Reactome" id="R-RNO-210990">
    <property type="pathway name" value="PECAM1 interactions"/>
</dbReference>
<dbReference type="Reactome" id="R-RNO-912526">
    <property type="pathway name" value="Interleukin receptor SHC signaling"/>
</dbReference>
<dbReference type="PRO" id="PR:P97573"/>
<dbReference type="Proteomes" id="UP000002494">
    <property type="component" value="Unplaced"/>
</dbReference>
<dbReference type="GO" id="GO:0005884">
    <property type="term" value="C:actin filament"/>
    <property type="evidence" value="ECO:0000314"/>
    <property type="project" value="RGD"/>
</dbReference>
<dbReference type="GO" id="GO:0030863">
    <property type="term" value="C:cortical cytoskeleton"/>
    <property type="evidence" value="ECO:0000314"/>
    <property type="project" value="RGD"/>
</dbReference>
<dbReference type="GO" id="GO:0005737">
    <property type="term" value="C:cytoplasm"/>
    <property type="evidence" value="ECO:0000266"/>
    <property type="project" value="RGD"/>
</dbReference>
<dbReference type="GO" id="GO:0005829">
    <property type="term" value="C:cytosol"/>
    <property type="evidence" value="ECO:0000318"/>
    <property type="project" value="GO_Central"/>
</dbReference>
<dbReference type="GO" id="GO:0045121">
    <property type="term" value="C:membrane raft"/>
    <property type="evidence" value="ECO:0007669"/>
    <property type="project" value="UniProtKB-SubCell"/>
</dbReference>
<dbReference type="GO" id="GO:0005886">
    <property type="term" value="C:plasma membrane"/>
    <property type="evidence" value="ECO:0007669"/>
    <property type="project" value="UniProtKB-SubCell"/>
</dbReference>
<dbReference type="GO" id="GO:0052659">
    <property type="term" value="F:inositol-1,3,4,5-tetrakisphosphate 5-phosphatase activity"/>
    <property type="evidence" value="ECO:0007669"/>
    <property type="project" value="RHEA"/>
</dbReference>
<dbReference type="GO" id="GO:0030487">
    <property type="term" value="F:inositol-4,5-bisphosphate 5-phosphatase activity"/>
    <property type="evidence" value="ECO:0000314"/>
    <property type="project" value="RGD"/>
</dbReference>
<dbReference type="GO" id="GO:0004445">
    <property type="term" value="F:inositol-polyphosphate 5-phosphatase activity"/>
    <property type="evidence" value="ECO:0000266"/>
    <property type="project" value="RGD"/>
</dbReference>
<dbReference type="GO" id="GO:0034485">
    <property type="term" value="F:phosphatidylinositol-3,4,5-trisphosphate 5-phosphatase activity"/>
    <property type="evidence" value="ECO:0007669"/>
    <property type="project" value="UniProtKB-EC"/>
</dbReference>
<dbReference type="GO" id="GO:0004439">
    <property type="term" value="F:phosphatidylinositol-4,5-bisphosphate 5-phosphatase activity"/>
    <property type="evidence" value="ECO:0007669"/>
    <property type="project" value="UniProtKB-EC"/>
</dbReference>
<dbReference type="GO" id="GO:0017124">
    <property type="term" value="F:SH3 domain binding"/>
    <property type="evidence" value="ECO:0007669"/>
    <property type="project" value="UniProtKB-KW"/>
</dbReference>
<dbReference type="GO" id="GO:0006915">
    <property type="term" value="P:apoptotic process"/>
    <property type="evidence" value="ECO:0007669"/>
    <property type="project" value="UniProtKB-KW"/>
</dbReference>
<dbReference type="GO" id="GO:0008340">
    <property type="term" value="P:determination of adult lifespan"/>
    <property type="evidence" value="ECO:0000266"/>
    <property type="project" value="RGD"/>
</dbReference>
<dbReference type="GO" id="GO:0016064">
    <property type="term" value="P:immunoglobulin mediated immune response"/>
    <property type="evidence" value="ECO:0000266"/>
    <property type="project" value="RGD"/>
</dbReference>
<dbReference type="GO" id="GO:0035556">
    <property type="term" value="P:intracellular signal transduction"/>
    <property type="evidence" value="ECO:0000266"/>
    <property type="project" value="RGD"/>
</dbReference>
<dbReference type="GO" id="GO:0050869">
    <property type="term" value="P:negative regulation of B cell activation"/>
    <property type="evidence" value="ECO:0000266"/>
    <property type="project" value="RGD"/>
</dbReference>
<dbReference type="GO" id="GO:0030889">
    <property type="term" value="P:negative regulation of B cell proliferation"/>
    <property type="evidence" value="ECO:0000266"/>
    <property type="project" value="RGD"/>
</dbReference>
<dbReference type="GO" id="GO:0045779">
    <property type="term" value="P:negative regulation of bone resorption"/>
    <property type="evidence" value="ECO:0000266"/>
    <property type="project" value="RGD"/>
</dbReference>
<dbReference type="GO" id="GO:0030853">
    <property type="term" value="P:negative regulation of granulocyte differentiation"/>
    <property type="evidence" value="ECO:0000266"/>
    <property type="project" value="RGD"/>
</dbReference>
<dbReference type="GO" id="GO:0050777">
    <property type="term" value="P:negative regulation of immune response"/>
    <property type="evidence" value="ECO:0000266"/>
    <property type="project" value="RGD"/>
</dbReference>
<dbReference type="GO" id="GO:0032715">
    <property type="term" value="P:negative regulation of interleukin-6 production"/>
    <property type="evidence" value="ECO:0000266"/>
    <property type="project" value="RGD"/>
</dbReference>
<dbReference type="GO" id="GO:0045656">
    <property type="term" value="P:negative regulation of monocyte differentiation"/>
    <property type="evidence" value="ECO:0000266"/>
    <property type="project" value="RGD"/>
</dbReference>
<dbReference type="GO" id="GO:0045953">
    <property type="term" value="P:negative regulation of natural killer cell mediated cytotoxicity"/>
    <property type="evidence" value="ECO:0000266"/>
    <property type="project" value="RGD"/>
</dbReference>
<dbReference type="GO" id="GO:0045659">
    <property type="term" value="P:negative regulation of neutrophil differentiation"/>
    <property type="evidence" value="ECO:0000266"/>
    <property type="project" value="RGD"/>
</dbReference>
<dbReference type="GO" id="GO:0045671">
    <property type="term" value="P:negative regulation of osteoclast differentiation"/>
    <property type="evidence" value="ECO:0000266"/>
    <property type="project" value="RGD"/>
</dbReference>
<dbReference type="GO" id="GO:0009968">
    <property type="term" value="P:negative regulation of signal transduction"/>
    <property type="evidence" value="ECO:0000266"/>
    <property type="project" value="RGD"/>
</dbReference>
<dbReference type="GO" id="GO:0046856">
    <property type="term" value="P:phosphatidylinositol dephosphorylation"/>
    <property type="evidence" value="ECO:0007669"/>
    <property type="project" value="InterPro"/>
</dbReference>
<dbReference type="GO" id="GO:0043065">
    <property type="term" value="P:positive regulation of apoptotic process"/>
    <property type="evidence" value="ECO:0000266"/>
    <property type="project" value="RGD"/>
</dbReference>
<dbReference type="GO" id="GO:0045579">
    <property type="term" value="P:positive regulation of B cell differentiation"/>
    <property type="evidence" value="ECO:0000266"/>
    <property type="project" value="RGD"/>
</dbReference>
<dbReference type="GO" id="GO:0045648">
    <property type="term" value="P:positive regulation of erythrocyte differentiation"/>
    <property type="evidence" value="ECO:0000266"/>
    <property type="project" value="RGD"/>
</dbReference>
<dbReference type="GO" id="GO:0045621">
    <property type="term" value="P:positive regulation of lymphocyte differentiation"/>
    <property type="evidence" value="ECO:0000266"/>
    <property type="project" value="RGD"/>
</dbReference>
<dbReference type="GO" id="GO:0050776">
    <property type="term" value="P:regulation of immune response"/>
    <property type="evidence" value="ECO:0000318"/>
    <property type="project" value="GO_Central"/>
</dbReference>
<dbReference type="CDD" id="cd09100">
    <property type="entry name" value="INPP5c_SHIP1-INPP5D"/>
    <property type="match status" value="1"/>
</dbReference>
<dbReference type="CDD" id="cd10343">
    <property type="entry name" value="SH2_SHIP"/>
    <property type="match status" value="1"/>
</dbReference>
<dbReference type="FunFam" id="3.30.505.10:FF:000035">
    <property type="entry name" value="phosphatidylinositol 3,4,5-trisphosphate 5-phosphatase 1"/>
    <property type="match status" value="1"/>
</dbReference>
<dbReference type="FunFam" id="3.60.10.10:FF:000005">
    <property type="entry name" value="phosphatidylinositol 3,4,5-trisphosphate 5-phosphatase 1"/>
    <property type="match status" value="1"/>
</dbReference>
<dbReference type="Gene3D" id="3.60.10.10">
    <property type="entry name" value="Endonuclease/exonuclease/phosphatase"/>
    <property type="match status" value="1"/>
</dbReference>
<dbReference type="Gene3D" id="3.30.505.10">
    <property type="entry name" value="SH2 domain"/>
    <property type="match status" value="1"/>
</dbReference>
<dbReference type="InterPro" id="IPR036691">
    <property type="entry name" value="Endo/exonu/phosph_ase_sf"/>
</dbReference>
<dbReference type="InterPro" id="IPR000300">
    <property type="entry name" value="IPPc"/>
</dbReference>
<dbReference type="InterPro" id="IPR000980">
    <property type="entry name" value="SH2"/>
</dbReference>
<dbReference type="InterPro" id="IPR036860">
    <property type="entry name" value="SH2_dom_sf"/>
</dbReference>
<dbReference type="PANTHER" id="PTHR46051:SF3">
    <property type="entry name" value="PHOSPHATIDYLINOSITOL 3,4,5-TRISPHOSPHATE 5-PHOSPHATASE 1"/>
    <property type="match status" value="1"/>
</dbReference>
<dbReference type="PANTHER" id="PTHR46051">
    <property type="entry name" value="SH2 DOMAIN-CONTAINING PROTEIN"/>
    <property type="match status" value="1"/>
</dbReference>
<dbReference type="Pfam" id="PF24147">
    <property type="entry name" value="C2_SHIP1-2_2nd"/>
    <property type="match status" value="1"/>
</dbReference>
<dbReference type="Pfam" id="PF24150">
    <property type="entry name" value="C2_SHIP1-2_first"/>
    <property type="match status" value="1"/>
</dbReference>
<dbReference type="Pfam" id="PF22669">
    <property type="entry name" value="Exo_endo_phos2"/>
    <property type="match status" value="1"/>
</dbReference>
<dbReference type="Pfam" id="PF00017">
    <property type="entry name" value="SH2"/>
    <property type="match status" value="1"/>
</dbReference>
<dbReference type="PRINTS" id="PR00401">
    <property type="entry name" value="SH2DOMAIN"/>
</dbReference>
<dbReference type="SMART" id="SM00128">
    <property type="entry name" value="IPPc"/>
    <property type="match status" value="1"/>
</dbReference>
<dbReference type="SMART" id="SM00252">
    <property type="entry name" value="SH2"/>
    <property type="match status" value="1"/>
</dbReference>
<dbReference type="SUPFAM" id="SSF56219">
    <property type="entry name" value="DNase I-like"/>
    <property type="match status" value="1"/>
</dbReference>
<dbReference type="SUPFAM" id="SSF55550">
    <property type="entry name" value="SH2 domain"/>
    <property type="match status" value="1"/>
</dbReference>
<dbReference type="PROSITE" id="PS50001">
    <property type="entry name" value="SH2"/>
    <property type="match status" value="1"/>
</dbReference>
<name>SHIP1_RAT</name>
<sequence>MPAMVPGWNHGNITRSKAEELLSRAGKDGSFLVRASESIPRAYALCVLFRNCVYTYRILPNEDDKFTVQASEGVPMRFFTKLDQLIEFYKKENMGLVTHLQFPVPLEEEDAIDEPEEDTESVMSPPELPPRNIPVSGGPCEAKDLPLPTENPRAPEVTRLSLSETLFQRLQSMDTSGLPEEHLKAIQDYLSTQLMLDSDFLKTGSSNLPHLKKLTSLLCKELHGEVIRTLPSLESLQRLFDQQLSPGLRPRPQVPGEANPITMVAKLSQLTSLLSSIEDKVKALLHEGSESTNRRSLIPPVTFEVKSESLGIPQKMHLKVDVESGKLIIKKSRDGSEDKFYSHKKILQLIKSQKFLNKLVILVETEKEKILRKEYVFSDSKKREGFCQLLQQMKNKHSEQSEPDMITIFIGTWNMGNAPPPKKITSWFLSKGQGKTRDDSADYIPHDIYVIGTQEDPLGEKEWLEILRHSLQEVTSMTFKTVAIHTLWNIRIVVLAKPEHENRISHICTDNVKTGIANTLGNKGAVGVSFMFNGTSLGFVNSHLTSGSEKKLRRNQNYMNILRFLALGDKKLSPFNITHRFTHLFWLGDLNYRVELPTWEAEAIIQKIKQQQYSDLLAHDQLLLERKEQEVFLHFEEEEITFAPTYRFERLTRDKYAYTKQKATGMKYNLPSWCDRVLWKSYPLVHVVCQSYGSTSDIMTSDHSPVFATFEAGVTSQFVSKNGPGAVDSQGQIEFLACYATLKTKSQTKFYLELHSSCLESFVKSQEGENEEGDEGELVVRFGETLPKLKPIISDPEYLLDQHILISIKSSDSDESYGEGCIALRLETTESQLPIYTPLTHHGEMTGHFRGEIKLQTSEGKMREKLYDFVKTERDESSGMKCLKNLTSHDPMRQWEPAGRVPACGISSLNEIINPNYIGMGPFGQPLHGKSTLSPDQQLTAWSYDQLPKDSSLGPGRGEGPPTPPSQPPLSPKKFSSSTANRGSCPRVQETRPGDLGKVEALPQEDLPLTKPEMFENPLYGSVSPFPKLVPRKEQESPKMMRKEPPPCPDPGVSSPSIMLPKAQEVENVKGTSKQAPVPVFGPTPRIRSFTCSSSAEGRMPSGDKSQGKPKAPASSQAPVPVKRPVKPSRSEMSQQTTPIPAPRPPLPVKSPAVLQLQHSKGRDYRDNTELPHHGKHRQEESLLGRTAMQ</sequence>
<accession>P97573</accession>